<comment type="function">
    <text>Insulin decreases blood glucose concentration. It increases cell permeability to monosaccharides, amino acids and fatty acids. It accelerates glycolysis, the pentose phosphate cycle, and glycogen synthesis in liver.</text>
</comment>
<comment type="subunit">
    <text>Heterodimer of a B chain and an A chain linked by two disulfide bonds.</text>
</comment>
<comment type="subcellular location">
    <subcellularLocation>
        <location>Secreted</location>
    </subcellularLocation>
</comment>
<comment type="miscellaneous">
    <text>The species of elephant is not given, but it is most probably the indian elephant (Elephas maximus).</text>
</comment>
<comment type="similarity">
    <text evidence="1">Belongs to the insulin family.</text>
</comment>
<keyword id="KW-0119">Carbohydrate metabolism</keyword>
<keyword id="KW-0903">Direct protein sequencing</keyword>
<keyword id="KW-1015">Disulfide bond</keyword>
<keyword id="KW-0313">Glucose metabolism</keyword>
<keyword id="KW-0372">Hormone</keyword>
<keyword id="KW-0964">Secreted</keyword>
<organism>
    <name type="scientific">Elephas maximus</name>
    <name type="common">Indian elephant</name>
    <dbReference type="NCBI Taxonomy" id="9783"/>
    <lineage>
        <taxon>Eukaryota</taxon>
        <taxon>Metazoa</taxon>
        <taxon>Chordata</taxon>
        <taxon>Craniata</taxon>
        <taxon>Vertebrata</taxon>
        <taxon>Euteleostomi</taxon>
        <taxon>Mammalia</taxon>
        <taxon>Eutheria</taxon>
        <taxon>Afrotheria</taxon>
        <taxon>Proboscidea</taxon>
        <taxon>Elephantidae</taxon>
        <taxon>Elephas</taxon>
    </lineage>
</organism>
<gene>
    <name type="primary">INS</name>
</gene>
<accession>P01316</accession>
<proteinExistence type="evidence at protein level"/>
<name>INS_ELEMA</name>
<reference key="1">
    <citation type="journal article" date="1966" name="Am. J. Med.">
        <title>Species variation in the amino acid sequence of insulin.</title>
        <authorList>
            <person name="Smith L.F."/>
        </authorList>
    </citation>
    <scope>PROTEIN SEQUENCE</scope>
</reference>
<evidence type="ECO:0000305" key="1"/>
<sequence length="51" mass="5752">FVNQHLCGSHLVEALYLVCGERGFFYTPKTGIVEQCCTGVCSLYQLENYCN</sequence>
<dbReference type="BMRB" id="P01316"/>
<dbReference type="SMR" id="P01316"/>
<dbReference type="GO" id="GO:0005615">
    <property type="term" value="C:extracellular space"/>
    <property type="evidence" value="ECO:0007669"/>
    <property type="project" value="TreeGrafter"/>
</dbReference>
<dbReference type="GO" id="GO:0005179">
    <property type="term" value="F:hormone activity"/>
    <property type="evidence" value="ECO:0007669"/>
    <property type="project" value="UniProtKB-KW"/>
</dbReference>
<dbReference type="GO" id="GO:1901701">
    <property type="term" value="P:cellular response to oxygen-containing compound"/>
    <property type="evidence" value="ECO:0007669"/>
    <property type="project" value="UniProtKB-ARBA"/>
</dbReference>
<dbReference type="GO" id="GO:0042593">
    <property type="term" value="P:glucose homeostasis"/>
    <property type="evidence" value="ECO:0007669"/>
    <property type="project" value="TreeGrafter"/>
</dbReference>
<dbReference type="GO" id="GO:0006006">
    <property type="term" value="P:glucose metabolic process"/>
    <property type="evidence" value="ECO:0007669"/>
    <property type="project" value="UniProtKB-KW"/>
</dbReference>
<dbReference type="GO" id="GO:0050714">
    <property type="term" value="P:positive regulation of protein secretion"/>
    <property type="evidence" value="ECO:0007669"/>
    <property type="project" value="TreeGrafter"/>
</dbReference>
<dbReference type="CDD" id="cd04367">
    <property type="entry name" value="IlGF_insulin_like"/>
    <property type="match status" value="1"/>
</dbReference>
<dbReference type="Gene3D" id="1.10.100.10">
    <property type="entry name" value="Insulin-like"/>
    <property type="match status" value="2"/>
</dbReference>
<dbReference type="InterPro" id="IPR004825">
    <property type="entry name" value="Insulin"/>
</dbReference>
<dbReference type="InterPro" id="IPR016179">
    <property type="entry name" value="Insulin-like"/>
</dbReference>
<dbReference type="InterPro" id="IPR036438">
    <property type="entry name" value="Insulin-like_sf"/>
</dbReference>
<dbReference type="InterPro" id="IPR022353">
    <property type="entry name" value="Insulin_CS"/>
</dbReference>
<dbReference type="InterPro" id="IPR022352">
    <property type="entry name" value="Insulin_family"/>
</dbReference>
<dbReference type="PANTHER" id="PTHR11454:SF9">
    <property type="entry name" value="INSULIN"/>
    <property type="match status" value="1"/>
</dbReference>
<dbReference type="PANTHER" id="PTHR11454">
    <property type="entry name" value="INSULIN/INSULIN GROWTH FACTOR"/>
    <property type="match status" value="1"/>
</dbReference>
<dbReference type="Pfam" id="PF00049">
    <property type="entry name" value="Insulin"/>
    <property type="match status" value="1"/>
</dbReference>
<dbReference type="PRINTS" id="PR00277">
    <property type="entry name" value="INSULIN"/>
</dbReference>
<dbReference type="PRINTS" id="PR00276">
    <property type="entry name" value="INSULINFAMLY"/>
</dbReference>
<dbReference type="SMART" id="SM00078">
    <property type="entry name" value="IlGF"/>
    <property type="match status" value="1"/>
</dbReference>
<dbReference type="SUPFAM" id="SSF56994">
    <property type="entry name" value="Insulin-like"/>
    <property type="match status" value="1"/>
</dbReference>
<dbReference type="PROSITE" id="PS00262">
    <property type="entry name" value="INSULIN"/>
    <property type="match status" value="1"/>
</dbReference>
<protein>
    <recommendedName>
        <fullName>Insulin</fullName>
    </recommendedName>
    <component>
        <recommendedName>
            <fullName>Insulin B chain</fullName>
        </recommendedName>
    </component>
    <component>
        <recommendedName>
            <fullName>Insulin A chain</fullName>
        </recommendedName>
    </component>
</protein>
<feature type="peptide" id="PRO_0000015807" description="Insulin B chain">
    <location>
        <begin position="1"/>
        <end position="30"/>
    </location>
</feature>
<feature type="peptide" id="PRO_0000015808" description="Insulin A chain">
    <location>
        <begin position="31"/>
        <end position="51"/>
    </location>
</feature>
<feature type="disulfide bond" description="Interchain (between B and A chains)">
    <location>
        <begin position="7"/>
        <end position="37"/>
    </location>
</feature>
<feature type="disulfide bond" description="Interchain (between B and A chains)">
    <location>
        <begin position="19"/>
        <end position="50"/>
    </location>
</feature>
<feature type="disulfide bond">
    <location>
        <begin position="36"/>
        <end position="41"/>
    </location>
</feature>
<feature type="non-consecutive residues" evidence="1">
    <location>
        <begin position="30"/>
        <end position="31"/>
    </location>
</feature>